<feature type="chain" id="PRO_1000204463" description="Cytidylate kinase">
    <location>
        <begin position="1"/>
        <end position="189"/>
    </location>
</feature>
<feature type="binding site" evidence="1">
    <location>
        <begin position="7"/>
        <end position="15"/>
    </location>
    <ligand>
        <name>ATP</name>
        <dbReference type="ChEBI" id="CHEBI:30616"/>
    </ligand>
</feature>
<organism>
    <name type="scientific">Saccharolobus islandicus (strain Y.N.15.51 / Yellowstone #2)</name>
    <name type="common">Sulfolobus islandicus</name>
    <dbReference type="NCBI Taxonomy" id="419942"/>
    <lineage>
        <taxon>Archaea</taxon>
        <taxon>Thermoproteota</taxon>
        <taxon>Thermoprotei</taxon>
        <taxon>Sulfolobales</taxon>
        <taxon>Sulfolobaceae</taxon>
        <taxon>Saccharolobus</taxon>
    </lineage>
</organism>
<sequence length="189" mass="21730">MIIIISGPPGSGKTSVAIKLANELSYKFISAGKIFRDIAQKMGLDIINLNKVAESNFDIDKMVDKKIFEFILSEKNLIIESHIAGWLFREYTNIAIYLWAPLKIRANRIAIRDKISYDQAISQIIKREYMHYKRFNKFYGIDINDLSVFDLVINTSNVDVNNIVKLILTYLSLVSQNPQPLKEKDINDK</sequence>
<keyword id="KW-0067">ATP-binding</keyword>
<keyword id="KW-0963">Cytoplasm</keyword>
<keyword id="KW-0418">Kinase</keyword>
<keyword id="KW-0547">Nucleotide-binding</keyword>
<keyword id="KW-0808">Transferase</keyword>
<evidence type="ECO:0000255" key="1">
    <source>
        <dbReference type="HAMAP-Rule" id="MF_00239"/>
    </source>
</evidence>
<gene>
    <name evidence="1" type="primary">cmk</name>
    <name type="ordered locus">YN1551_1401</name>
</gene>
<reference key="1">
    <citation type="journal article" date="2009" name="Proc. Natl. Acad. Sci. U.S.A.">
        <title>Biogeography of the Sulfolobus islandicus pan-genome.</title>
        <authorList>
            <person name="Reno M.L."/>
            <person name="Held N.L."/>
            <person name="Fields C.J."/>
            <person name="Burke P.V."/>
            <person name="Whitaker R.J."/>
        </authorList>
    </citation>
    <scope>NUCLEOTIDE SEQUENCE [LARGE SCALE GENOMIC DNA]</scope>
    <source>
        <strain>Y.N.15.51 / Yellowstone #2</strain>
    </source>
</reference>
<comment type="catalytic activity">
    <reaction evidence="1">
        <text>CMP + ATP = CDP + ADP</text>
        <dbReference type="Rhea" id="RHEA:11600"/>
        <dbReference type="ChEBI" id="CHEBI:30616"/>
        <dbReference type="ChEBI" id="CHEBI:58069"/>
        <dbReference type="ChEBI" id="CHEBI:60377"/>
        <dbReference type="ChEBI" id="CHEBI:456216"/>
        <dbReference type="EC" id="2.7.4.25"/>
    </reaction>
</comment>
<comment type="catalytic activity">
    <reaction evidence="1">
        <text>dCMP + ATP = dCDP + ADP</text>
        <dbReference type="Rhea" id="RHEA:25094"/>
        <dbReference type="ChEBI" id="CHEBI:30616"/>
        <dbReference type="ChEBI" id="CHEBI:57566"/>
        <dbReference type="ChEBI" id="CHEBI:58593"/>
        <dbReference type="ChEBI" id="CHEBI:456216"/>
        <dbReference type="EC" id="2.7.4.25"/>
    </reaction>
</comment>
<comment type="subcellular location">
    <subcellularLocation>
        <location evidence="1">Cytoplasm</location>
    </subcellularLocation>
</comment>
<comment type="similarity">
    <text evidence="1">Belongs to the cytidylate kinase family. Type 2 subfamily.</text>
</comment>
<accession>C3NH82</accession>
<dbReference type="EC" id="2.7.4.25" evidence="1"/>
<dbReference type="EMBL" id="CP001404">
    <property type="protein sequence ID" value="ACP48492.1"/>
    <property type="molecule type" value="Genomic_DNA"/>
</dbReference>
<dbReference type="RefSeq" id="WP_012716182.1">
    <property type="nucleotide sequence ID" value="NC_012623.1"/>
</dbReference>
<dbReference type="SMR" id="C3NH82"/>
<dbReference type="GeneID" id="7809793"/>
<dbReference type="KEGG" id="sin:YN1551_1401"/>
<dbReference type="HOGENOM" id="CLU_079959_1_0_2"/>
<dbReference type="Proteomes" id="UP000006818">
    <property type="component" value="Chromosome"/>
</dbReference>
<dbReference type="GO" id="GO:0005737">
    <property type="term" value="C:cytoplasm"/>
    <property type="evidence" value="ECO:0007669"/>
    <property type="project" value="UniProtKB-SubCell"/>
</dbReference>
<dbReference type="GO" id="GO:0005524">
    <property type="term" value="F:ATP binding"/>
    <property type="evidence" value="ECO:0007669"/>
    <property type="project" value="UniProtKB-UniRule"/>
</dbReference>
<dbReference type="GO" id="GO:0036430">
    <property type="term" value="F:CMP kinase activity"/>
    <property type="evidence" value="ECO:0007669"/>
    <property type="project" value="RHEA"/>
</dbReference>
<dbReference type="GO" id="GO:0036431">
    <property type="term" value="F:dCMP kinase activity"/>
    <property type="evidence" value="ECO:0007669"/>
    <property type="project" value="RHEA"/>
</dbReference>
<dbReference type="GO" id="GO:0006220">
    <property type="term" value="P:pyrimidine nucleotide metabolic process"/>
    <property type="evidence" value="ECO:0007669"/>
    <property type="project" value="UniProtKB-UniRule"/>
</dbReference>
<dbReference type="CDD" id="cd02020">
    <property type="entry name" value="CMPK"/>
    <property type="match status" value="1"/>
</dbReference>
<dbReference type="Gene3D" id="3.40.50.300">
    <property type="entry name" value="P-loop containing nucleotide triphosphate hydrolases"/>
    <property type="match status" value="1"/>
</dbReference>
<dbReference type="HAMAP" id="MF_00239">
    <property type="entry name" value="Cytidyl_kinase_type2"/>
    <property type="match status" value="1"/>
</dbReference>
<dbReference type="InterPro" id="IPR011892">
    <property type="entry name" value="Cyt_kin_arch"/>
</dbReference>
<dbReference type="InterPro" id="IPR011994">
    <property type="entry name" value="Cytidylate_kinase_dom"/>
</dbReference>
<dbReference type="InterPro" id="IPR027417">
    <property type="entry name" value="P-loop_NTPase"/>
</dbReference>
<dbReference type="NCBIfam" id="TIGR02173">
    <property type="entry name" value="cyt_kin_arch"/>
    <property type="match status" value="1"/>
</dbReference>
<dbReference type="Pfam" id="PF13189">
    <property type="entry name" value="Cytidylate_kin2"/>
    <property type="match status" value="1"/>
</dbReference>
<dbReference type="SUPFAM" id="SSF52540">
    <property type="entry name" value="P-loop containing nucleoside triphosphate hydrolases"/>
    <property type="match status" value="1"/>
</dbReference>
<name>KCY_SACI1</name>
<protein>
    <recommendedName>
        <fullName evidence="1">Cytidylate kinase</fullName>
        <shortName evidence="1">CK</shortName>
        <ecNumber evidence="1">2.7.4.25</ecNumber>
    </recommendedName>
    <alternativeName>
        <fullName evidence="1">Cytidine monophosphate kinase</fullName>
        <shortName evidence="1">CMP kinase</shortName>
    </alternativeName>
</protein>
<proteinExistence type="inferred from homology"/>